<dbReference type="EMBL" id="CP000918">
    <property type="protein sequence ID" value="ACO17350.1"/>
    <property type="molecule type" value="Genomic_DNA"/>
</dbReference>
<dbReference type="RefSeq" id="WP_001287284.1">
    <property type="nucleotide sequence ID" value="NC_012468.1"/>
</dbReference>
<dbReference type="SMR" id="C1C7V5"/>
<dbReference type="KEGG" id="snm:SP70585_1393"/>
<dbReference type="HOGENOM" id="CLU_092227_2_0_9"/>
<dbReference type="Proteomes" id="UP000002211">
    <property type="component" value="Chromosome"/>
</dbReference>
<dbReference type="GO" id="GO:0015934">
    <property type="term" value="C:large ribosomal subunit"/>
    <property type="evidence" value="ECO:0007669"/>
    <property type="project" value="InterPro"/>
</dbReference>
<dbReference type="GO" id="GO:0070180">
    <property type="term" value="F:large ribosomal subunit rRNA binding"/>
    <property type="evidence" value="ECO:0007669"/>
    <property type="project" value="UniProtKB-UniRule"/>
</dbReference>
<dbReference type="GO" id="GO:0003735">
    <property type="term" value="F:structural constituent of ribosome"/>
    <property type="evidence" value="ECO:0007669"/>
    <property type="project" value="InterPro"/>
</dbReference>
<dbReference type="GO" id="GO:0006412">
    <property type="term" value="P:translation"/>
    <property type="evidence" value="ECO:0007669"/>
    <property type="project" value="UniProtKB-UniRule"/>
</dbReference>
<dbReference type="CDD" id="cd05797">
    <property type="entry name" value="Ribosomal_L10"/>
    <property type="match status" value="1"/>
</dbReference>
<dbReference type="FunFam" id="3.30.70.1730:FF:000001">
    <property type="entry name" value="50S ribosomal protein L10"/>
    <property type="match status" value="1"/>
</dbReference>
<dbReference type="Gene3D" id="3.30.70.1730">
    <property type="match status" value="1"/>
</dbReference>
<dbReference type="HAMAP" id="MF_00362">
    <property type="entry name" value="Ribosomal_uL10"/>
    <property type="match status" value="1"/>
</dbReference>
<dbReference type="InterPro" id="IPR001790">
    <property type="entry name" value="Ribosomal_uL10"/>
</dbReference>
<dbReference type="InterPro" id="IPR043141">
    <property type="entry name" value="Ribosomal_uL10-like_sf"/>
</dbReference>
<dbReference type="InterPro" id="IPR022973">
    <property type="entry name" value="Ribosomal_uL10_bac"/>
</dbReference>
<dbReference type="InterPro" id="IPR047865">
    <property type="entry name" value="Ribosomal_uL10_bac_type"/>
</dbReference>
<dbReference type="InterPro" id="IPR002363">
    <property type="entry name" value="Ribosomal_uL10_CS_bac"/>
</dbReference>
<dbReference type="NCBIfam" id="NF000955">
    <property type="entry name" value="PRK00099.1-1"/>
    <property type="match status" value="1"/>
</dbReference>
<dbReference type="PANTHER" id="PTHR11560">
    <property type="entry name" value="39S RIBOSOMAL PROTEIN L10, MITOCHONDRIAL"/>
    <property type="match status" value="1"/>
</dbReference>
<dbReference type="Pfam" id="PF00466">
    <property type="entry name" value="Ribosomal_L10"/>
    <property type="match status" value="1"/>
</dbReference>
<dbReference type="SUPFAM" id="SSF160369">
    <property type="entry name" value="Ribosomal protein L10-like"/>
    <property type="match status" value="1"/>
</dbReference>
<dbReference type="PROSITE" id="PS01109">
    <property type="entry name" value="RIBOSOMAL_L10"/>
    <property type="match status" value="1"/>
</dbReference>
<gene>
    <name evidence="1" type="primary">rplJ</name>
    <name type="ordered locus">SP70585_1393</name>
</gene>
<protein>
    <recommendedName>
        <fullName evidence="1">Large ribosomal subunit protein uL10</fullName>
    </recommendedName>
    <alternativeName>
        <fullName evidence="2">50S ribosomal protein L10</fullName>
    </alternativeName>
</protein>
<organism>
    <name type="scientific">Streptococcus pneumoniae (strain 70585)</name>
    <dbReference type="NCBI Taxonomy" id="488221"/>
    <lineage>
        <taxon>Bacteria</taxon>
        <taxon>Bacillati</taxon>
        <taxon>Bacillota</taxon>
        <taxon>Bacilli</taxon>
        <taxon>Lactobacillales</taxon>
        <taxon>Streptococcaceae</taxon>
        <taxon>Streptococcus</taxon>
    </lineage>
</organism>
<accession>C1C7V5</accession>
<evidence type="ECO:0000255" key="1">
    <source>
        <dbReference type="HAMAP-Rule" id="MF_00362"/>
    </source>
</evidence>
<evidence type="ECO:0000305" key="2"/>
<reference key="1">
    <citation type="journal article" date="2010" name="Genome Biol.">
        <title>Structure and dynamics of the pan-genome of Streptococcus pneumoniae and closely related species.</title>
        <authorList>
            <person name="Donati C."/>
            <person name="Hiller N.L."/>
            <person name="Tettelin H."/>
            <person name="Muzzi A."/>
            <person name="Croucher N.J."/>
            <person name="Angiuoli S.V."/>
            <person name="Oggioni M."/>
            <person name="Dunning Hotopp J.C."/>
            <person name="Hu F.Z."/>
            <person name="Riley D.R."/>
            <person name="Covacci A."/>
            <person name="Mitchell T.J."/>
            <person name="Bentley S.D."/>
            <person name="Kilian M."/>
            <person name="Ehrlich G.D."/>
            <person name="Rappuoli R."/>
            <person name="Moxon E.R."/>
            <person name="Masignani V."/>
        </authorList>
    </citation>
    <scope>NUCLEOTIDE SEQUENCE [LARGE SCALE GENOMIC DNA]</scope>
    <source>
        <strain>70585</strain>
    </source>
</reference>
<comment type="function">
    <text evidence="1">Forms part of the ribosomal stalk, playing a central role in the interaction of the ribosome with GTP-bound translation factors.</text>
</comment>
<comment type="subunit">
    <text evidence="1">Part of the ribosomal stalk of the 50S ribosomal subunit. The N-terminus interacts with L11 and the large rRNA to form the base of the stalk. The C-terminus forms an elongated spine to which L12 dimers bind in a sequential fashion forming a multimeric L10(L12)X complex.</text>
</comment>
<comment type="similarity">
    <text evidence="1">Belongs to the universal ribosomal protein uL10 family.</text>
</comment>
<feature type="chain" id="PRO_1000195566" description="Large ribosomal subunit protein uL10">
    <location>
        <begin position="1"/>
        <end position="166"/>
    </location>
</feature>
<name>RL10_STRP7</name>
<sequence>MSEAIIAKKAELVDVVAGKMKAAASIVVVDARGLTVEQDTVLRRELRGSEVEYKVIKNSILRRAAEKAGLEDLASVFVGPSAVAFSNEDVIAPAKILNDFSKNAEALEIKGGAIEGAVASKEEILALATLPNREGLLSMLLSVLQAPVRNVALAVKAVAESKEDAA</sequence>
<proteinExistence type="inferred from homology"/>
<keyword id="KW-0687">Ribonucleoprotein</keyword>
<keyword id="KW-0689">Ribosomal protein</keyword>
<keyword id="KW-0694">RNA-binding</keyword>
<keyword id="KW-0699">rRNA-binding</keyword>